<keyword id="KW-0002">3D-structure</keyword>
<keyword id="KW-0413">Isomerase</keyword>
<keyword id="KW-0460">Magnesium</keyword>
<keyword id="KW-0479">Metal-binding</keyword>
<keyword id="KW-1185">Reference proteome</keyword>
<evidence type="ECO:0000269" key="1">
    <source>
    </source>
</evidence>
<evidence type="ECO:0000305" key="2"/>
<evidence type="ECO:0007829" key="3">
    <source>
        <dbReference type="PDB" id="2P8B"/>
    </source>
</evidence>
<evidence type="ECO:0007829" key="4">
    <source>
        <dbReference type="PDB" id="2P8C"/>
    </source>
</evidence>
<organism>
    <name type="scientific">Bacillus cereus (strain ATCC 14579 / DSM 31 / CCUG 7414 / JCM 2152 / NBRC 15305 / NCIMB 9373 / NCTC 2599 / NRRL B-3711)</name>
    <dbReference type="NCBI Taxonomy" id="226900"/>
    <lineage>
        <taxon>Bacteria</taxon>
        <taxon>Bacillati</taxon>
        <taxon>Bacillota</taxon>
        <taxon>Bacilli</taxon>
        <taxon>Bacillales</taxon>
        <taxon>Bacillaceae</taxon>
        <taxon>Bacillus</taxon>
        <taxon>Bacillus cereus group</taxon>
    </lineage>
</organism>
<comment type="function">
    <text evidence="1">Catalyzes efficient racemization of N-succinyl-L-Arg and N-succinyl-L-Lys, suggesting that these are physiological substrates of this enzyme. Has low activity with L-Asp-L-Lys, and even lower activity with L-Leu-L-Arg, L-Leu-L-Lys, N-succinyl-L-His and N-succinyl-L-Met (in vitro).</text>
</comment>
<comment type="cofactor">
    <cofactor evidence="1">
        <name>Mg(2+)</name>
        <dbReference type="ChEBI" id="CHEBI:18420"/>
    </cofactor>
    <text evidence="1">Binds 1 Mg(2+) ion per subunit.</text>
</comment>
<comment type="biophysicochemical properties">
    <kinetics>
        <KM evidence="1">0.5 mM for N-succinyl-L-Arg</KM>
        <KM evidence="1">3 mM for N-succinyl-L-Met</KM>
        <KM evidence="1">11 mM for N-succinyl-L-His</KM>
        <KM evidence="1">1.2 mM for L-Leu-L-Lys</KM>
        <KM evidence="1">3.9 mM for L-Asp-L-Lys</KM>
        <KM evidence="1">16 mM for L-Leu-L-Arg</KM>
    </kinetics>
</comment>
<comment type="miscellaneous">
    <text>Part of a large, functionally divergent protein family. Protein modeling and substrate docking was used to predict the substrate specificity, prior to biochemical analysis.</text>
</comment>
<comment type="similarity">
    <text evidence="2">Belongs to the mandelate racemase/muconate lactonizing enzyme family.</text>
</comment>
<gene>
    <name type="ordered locus">BC_0371</name>
</gene>
<proteinExistence type="evidence at protein level"/>
<sequence>MKITAIHLYAIRLPLRNPFVISYGSYSDMPSIIVKMETDEGIIGYGEGVADDHVTGESWESTFHTLKHTLTPALIGQNPMNIEKIHDMMDNTIYGVPTAKAAIDIACFDIMGKKLNQPVYQLIGGRYHEEFPVTHVLSIADPENMAEEAASMIQKGYQSFKMKVGTNVKEDVKRIEAVRERVGNDIAIRVDVNQGWKNSANTLTALRSLGHLNIDWIEQPVIADDIDAMAHIRSKTDLPLMIDEGLKSSREMRQIIKLEAADKVNIKLMKCGGIYPAVKLAHQAEMAGIECQVGSMVESSVASSAGFHVAFSKKIITSVELTGPLKFTKDIGNLHYDVPFIRLNEKPGLGIEINEDTLQELTVFQDIVR</sequence>
<name>NSAR_BACCR</name>
<dbReference type="EC" id="5.1.1.-"/>
<dbReference type="EMBL" id="AE016877">
    <property type="protein sequence ID" value="AAP07411.1"/>
    <property type="molecule type" value="Genomic_DNA"/>
</dbReference>
<dbReference type="RefSeq" id="NP_830210.1">
    <property type="nucleotide sequence ID" value="NC_004722.1"/>
</dbReference>
<dbReference type="RefSeq" id="WP_000704492.1">
    <property type="nucleotide sequence ID" value="NC_004722.1"/>
</dbReference>
<dbReference type="PDB" id="2P88">
    <property type="method" value="X-ray"/>
    <property type="resolution" value="2.40 A"/>
    <property type="chains" value="A/B/C/D/E/F/G/H=1-369"/>
</dbReference>
<dbReference type="PDB" id="2P8B">
    <property type="method" value="X-ray"/>
    <property type="resolution" value="1.70 A"/>
    <property type="chains" value="A=1-369"/>
</dbReference>
<dbReference type="PDB" id="2P8C">
    <property type="method" value="X-ray"/>
    <property type="resolution" value="2.00 A"/>
    <property type="chains" value="A=1-369"/>
</dbReference>
<dbReference type="PDBsum" id="2P88"/>
<dbReference type="PDBsum" id="2P8B"/>
<dbReference type="PDBsum" id="2P8C"/>
<dbReference type="SMR" id="Q81IL5"/>
<dbReference type="STRING" id="226900.BC_0371"/>
<dbReference type="KEGG" id="bce:BC0371"/>
<dbReference type="PATRIC" id="fig|226900.8.peg.343"/>
<dbReference type="HOGENOM" id="CLU_030273_4_0_9"/>
<dbReference type="OrthoDB" id="9775391at2"/>
<dbReference type="SABIO-RK" id="Q81IL5"/>
<dbReference type="EvolutionaryTrace" id="Q81IL5"/>
<dbReference type="Proteomes" id="UP000001417">
    <property type="component" value="Chromosome"/>
</dbReference>
<dbReference type="GO" id="GO:0047661">
    <property type="term" value="F:amino-acid racemase activity"/>
    <property type="evidence" value="ECO:0000314"/>
    <property type="project" value="CACAO"/>
</dbReference>
<dbReference type="GO" id="GO:0000287">
    <property type="term" value="F:magnesium ion binding"/>
    <property type="evidence" value="ECO:0000314"/>
    <property type="project" value="UniProtKB"/>
</dbReference>
<dbReference type="GO" id="GO:0016854">
    <property type="term" value="F:racemase and epimerase activity"/>
    <property type="evidence" value="ECO:0000314"/>
    <property type="project" value="UniProtKB"/>
</dbReference>
<dbReference type="GO" id="GO:0006518">
    <property type="term" value="P:peptide metabolic process"/>
    <property type="evidence" value="ECO:0000314"/>
    <property type="project" value="UniProtKB"/>
</dbReference>
<dbReference type="CDD" id="cd03319">
    <property type="entry name" value="L-Ala-DL-Glu_epimerase"/>
    <property type="match status" value="1"/>
</dbReference>
<dbReference type="FunFam" id="3.20.20.120:FF:000017">
    <property type="entry name" value="Dipeptide epimerase"/>
    <property type="match status" value="1"/>
</dbReference>
<dbReference type="FunFam" id="3.30.390.10:FF:000009">
    <property type="entry name" value="Hydrophobic dipeptide epimerase"/>
    <property type="match status" value="1"/>
</dbReference>
<dbReference type="Gene3D" id="3.20.20.120">
    <property type="entry name" value="Enolase-like C-terminal domain"/>
    <property type="match status" value="1"/>
</dbReference>
<dbReference type="Gene3D" id="3.30.390.10">
    <property type="entry name" value="Enolase-like, N-terminal domain"/>
    <property type="match status" value="1"/>
</dbReference>
<dbReference type="InterPro" id="IPR034603">
    <property type="entry name" value="Dipeptide_epimerase"/>
</dbReference>
<dbReference type="InterPro" id="IPR036849">
    <property type="entry name" value="Enolase-like_C_sf"/>
</dbReference>
<dbReference type="InterPro" id="IPR029017">
    <property type="entry name" value="Enolase-like_N"/>
</dbReference>
<dbReference type="InterPro" id="IPR029065">
    <property type="entry name" value="Enolase_C-like"/>
</dbReference>
<dbReference type="InterPro" id="IPR013342">
    <property type="entry name" value="Mandelate_racemase_C"/>
</dbReference>
<dbReference type="InterPro" id="IPR013341">
    <property type="entry name" value="Mandelate_racemase_N_dom"/>
</dbReference>
<dbReference type="PANTHER" id="PTHR48073:SF2">
    <property type="entry name" value="O-SUCCINYLBENZOATE SYNTHASE"/>
    <property type="match status" value="1"/>
</dbReference>
<dbReference type="PANTHER" id="PTHR48073">
    <property type="entry name" value="O-SUCCINYLBENZOATE SYNTHASE-RELATED"/>
    <property type="match status" value="1"/>
</dbReference>
<dbReference type="Pfam" id="PF13378">
    <property type="entry name" value="MR_MLE_C"/>
    <property type="match status" value="1"/>
</dbReference>
<dbReference type="Pfam" id="PF02746">
    <property type="entry name" value="MR_MLE_N"/>
    <property type="match status" value="1"/>
</dbReference>
<dbReference type="SFLD" id="SFLDS00001">
    <property type="entry name" value="Enolase"/>
    <property type="match status" value="1"/>
</dbReference>
<dbReference type="SFLD" id="SFLDF00154">
    <property type="entry name" value="N-succinylamino_acid_racemase"/>
    <property type="match status" value="1"/>
</dbReference>
<dbReference type="SFLD" id="SFLDF00009">
    <property type="entry name" value="o-succinylbenzoate_synthase"/>
    <property type="match status" value="1"/>
</dbReference>
<dbReference type="SMART" id="SM00922">
    <property type="entry name" value="MR_MLE"/>
    <property type="match status" value="1"/>
</dbReference>
<dbReference type="SUPFAM" id="SSF51604">
    <property type="entry name" value="Enolase C-terminal domain-like"/>
    <property type="match status" value="1"/>
</dbReference>
<dbReference type="SUPFAM" id="SSF54826">
    <property type="entry name" value="Enolase N-terminal domain-like"/>
    <property type="match status" value="1"/>
</dbReference>
<feature type="chain" id="PRO_0000429658" description="N-succinyl-L-Arg/Lys racemase">
    <location>
        <begin position="1"/>
        <end position="369"/>
    </location>
</feature>
<feature type="binding site">
    <location>
        <position position="26"/>
    </location>
    <ligand>
        <name>substrate</name>
    </ligand>
</feature>
<feature type="binding site">
    <location>
        <position position="51"/>
    </location>
    <ligand>
        <name>substrate</name>
    </ligand>
</feature>
<feature type="binding site">
    <location>
        <begin position="161"/>
        <end position="163"/>
    </location>
    <ligand>
        <name>substrate</name>
    </ligand>
</feature>
<feature type="binding site">
    <location>
        <begin position="191"/>
        <end position="193"/>
    </location>
    <ligand>
        <name>substrate</name>
    </ligand>
</feature>
<feature type="binding site" evidence="1">
    <location>
        <position position="191"/>
    </location>
    <ligand>
        <name>Mg(2+)</name>
        <dbReference type="ChEBI" id="CHEBI:18420"/>
    </ligand>
</feature>
<feature type="binding site" evidence="1">
    <location>
        <position position="218"/>
    </location>
    <ligand>
        <name>Mg(2+)</name>
        <dbReference type="ChEBI" id="CHEBI:18420"/>
    </ligand>
</feature>
<feature type="binding site" evidence="1">
    <location>
        <position position="243"/>
    </location>
    <ligand>
        <name>Mg(2+)</name>
        <dbReference type="ChEBI" id="CHEBI:18420"/>
    </ligand>
</feature>
<feature type="binding site">
    <location>
        <position position="267"/>
    </location>
    <ligand>
        <name>substrate</name>
    </ligand>
</feature>
<feature type="binding site">
    <location>
        <begin position="295"/>
        <end position="296"/>
    </location>
    <ligand>
        <name>substrate</name>
    </ligand>
</feature>
<feature type="binding site">
    <location>
        <begin position="320"/>
        <end position="322"/>
    </location>
    <ligand>
        <name>substrate</name>
    </ligand>
</feature>
<feature type="strand" evidence="3">
    <location>
        <begin position="3"/>
        <end position="21"/>
    </location>
</feature>
<feature type="strand" evidence="3">
    <location>
        <begin position="24"/>
        <end position="38"/>
    </location>
</feature>
<feature type="strand" evidence="3">
    <location>
        <begin position="43"/>
        <end position="48"/>
    </location>
</feature>
<feature type="helix" evidence="3">
    <location>
        <begin position="52"/>
        <end position="55"/>
    </location>
</feature>
<feature type="helix" evidence="3">
    <location>
        <begin position="59"/>
        <end position="68"/>
    </location>
</feature>
<feature type="helix" evidence="3">
    <location>
        <begin position="70"/>
        <end position="74"/>
    </location>
</feature>
<feature type="helix" evidence="3">
    <location>
        <begin position="82"/>
        <end position="92"/>
    </location>
</feature>
<feature type="helix" evidence="3">
    <location>
        <begin position="97"/>
        <end position="114"/>
    </location>
</feature>
<feature type="helix" evidence="3">
    <location>
        <begin position="119"/>
        <end position="122"/>
    </location>
</feature>
<feature type="strand" evidence="3">
    <location>
        <begin position="135"/>
        <end position="137"/>
    </location>
</feature>
<feature type="helix" evidence="3">
    <location>
        <begin position="142"/>
        <end position="154"/>
    </location>
</feature>
<feature type="strand" evidence="3">
    <location>
        <begin position="159"/>
        <end position="163"/>
    </location>
</feature>
<feature type="helix" evidence="3">
    <location>
        <begin position="168"/>
        <end position="182"/>
    </location>
</feature>
<feature type="strand" evidence="3">
    <location>
        <begin position="186"/>
        <end position="191"/>
    </location>
</feature>
<feature type="turn" evidence="3">
    <location>
        <begin position="193"/>
        <end position="196"/>
    </location>
</feature>
<feature type="helix" evidence="3">
    <location>
        <begin position="199"/>
        <end position="207"/>
    </location>
</feature>
<feature type="helix" evidence="4">
    <location>
        <begin position="210"/>
        <end position="212"/>
    </location>
</feature>
<feature type="helix" evidence="3">
    <location>
        <begin position="226"/>
        <end position="234"/>
    </location>
</feature>
<feature type="strand" evidence="3">
    <location>
        <begin position="240"/>
        <end position="243"/>
    </location>
</feature>
<feature type="helix" evidence="3">
    <location>
        <begin position="249"/>
        <end position="258"/>
    </location>
</feature>
<feature type="strand" evidence="3">
    <location>
        <begin position="262"/>
        <end position="266"/>
    </location>
</feature>
<feature type="helix" evidence="3">
    <location>
        <begin position="268"/>
        <end position="271"/>
    </location>
</feature>
<feature type="helix" evidence="3">
    <location>
        <begin position="274"/>
        <end position="286"/>
    </location>
</feature>
<feature type="strand" evidence="3">
    <location>
        <begin position="290"/>
        <end position="293"/>
    </location>
</feature>
<feature type="helix" evidence="3">
    <location>
        <begin position="300"/>
        <end position="310"/>
    </location>
</feature>
<feature type="strand" evidence="3">
    <location>
        <begin position="316"/>
        <end position="319"/>
    </location>
</feature>
<feature type="helix" evidence="3">
    <location>
        <begin position="323"/>
        <end position="326"/>
    </location>
</feature>
<feature type="helix" evidence="3">
    <location>
        <begin position="355"/>
        <end position="361"/>
    </location>
</feature>
<feature type="strand" evidence="3">
    <location>
        <begin position="362"/>
        <end position="368"/>
    </location>
</feature>
<reference key="1">
    <citation type="journal article" date="2003" name="Nature">
        <title>Genome sequence of Bacillus cereus and comparative analysis with Bacillus anthracis.</title>
        <authorList>
            <person name="Ivanova N."/>
            <person name="Sorokin A."/>
            <person name="Anderson I."/>
            <person name="Galleron N."/>
            <person name="Candelon B."/>
            <person name="Kapatral V."/>
            <person name="Bhattacharyya A."/>
            <person name="Reznik G."/>
            <person name="Mikhailova N."/>
            <person name="Lapidus A."/>
            <person name="Chu L."/>
            <person name="Mazur M."/>
            <person name="Goltsman E."/>
            <person name="Larsen N."/>
            <person name="D'Souza M."/>
            <person name="Walunas T."/>
            <person name="Grechkin Y."/>
            <person name="Pusch G."/>
            <person name="Haselkorn R."/>
            <person name="Fonstein M."/>
            <person name="Ehrlich S.D."/>
            <person name="Overbeek R."/>
            <person name="Kyrpides N.C."/>
        </authorList>
    </citation>
    <scope>NUCLEOTIDE SEQUENCE [LARGE SCALE GENOMIC DNA]</scope>
    <source>
        <strain>ATCC 14579 / DSM 31 / CCUG 7414 / JCM 2152 / NBRC 15305 / NCIMB 9373 / NCTC 2599 / NRRL B-3711</strain>
    </source>
</reference>
<reference key="2">
    <citation type="journal article" date="2007" name="Nat. Chem. Biol.">
        <title>Prediction and assignment of function for a divergent N-succinyl amino acid racemase.</title>
        <authorList>
            <person name="Song L."/>
            <person name="Kalyanaraman C."/>
            <person name="Fedorov A.A."/>
            <person name="Fedorov E.V."/>
            <person name="Glasner M.E."/>
            <person name="Brown S."/>
            <person name="Imker H.J."/>
            <person name="Babbitt P.C."/>
            <person name="Almo S.C."/>
            <person name="Jacobson M.P."/>
            <person name="Gerlt J.A."/>
        </authorList>
    </citation>
    <scope>X-RAY CRYSTALLOGRAPHY (1.70 ANGSTROMS) IN COMPLEX WITH N-SUCCINYL LYSINE AND MAGNESIUM</scope>
    <scope>FUNCTION</scope>
    <scope>COFACTOR</scope>
    <scope>BIOPHYSICOCHEMICAL PROPERTIES</scope>
    <source>
        <strain>ATCC 14579 / DSM 31 / CCUG 7414 / JCM 2152 / NBRC 15305 / NCIMB 9373 / NCTC 2599 / NRRL B-3711</strain>
    </source>
</reference>
<protein>
    <recommendedName>
        <fullName>N-succinyl-L-Arg/Lys racemase</fullName>
        <ecNumber>5.1.1.-</ecNumber>
    </recommendedName>
    <alternativeName>
        <fullName>N-succinyl amino acid racemase</fullName>
        <shortName>NSAR</shortName>
    </alternativeName>
</protein>
<accession>Q81IL5</accession>